<organism>
    <name type="scientific">Solanum lycopersicum</name>
    <name type="common">Tomato</name>
    <name type="synonym">Lycopersicon esculentum</name>
    <dbReference type="NCBI Taxonomy" id="4081"/>
    <lineage>
        <taxon>Eukaryota</taxon>
        <taxon>Viridiplantae</taxon>
        <taxon>Streptophyta</taxon>
        <taxon>Embryophyta</taxon>
        <taxon>Tracheophyta</taxon>
        <taxon>Spermatophyta</taxon>
        <taxon>Magnoliopsida</taxon>
        <taxon>eudicotyledons</taxon>
        <taxon>Gunneridae</taxon>
        <taxon>Pentapetalae</taxon>
        <taxon>asterids</taxon>
        <taxon>lamiids</taxon>
        <taxon>Solanales</taxon>
        <taxon>Solanaceae</taxon>
        <taxon>Solanoideae</taxon>
        <taxon>Solaneae</taxon>
        <taxon>Solanum</taxon>
        <taxon>Solanum subgen. Lycopersicon</taxon>
    </lineage>
</organism>
<proteinExistence type="evidence at transcript level"/>
<accession>Q8RVB2</accession>
<comment type="function">
    <text evidence="1">Probable O-linked N-acetylglucosamine transferase (OGT) involved in various processes such as gibberellin (GA) signaling pathway. OGTs catalyze the addition of nucleotide-activated sugars directly onto the polypeptide through O-glycosidic linkage with the hydroxyl of serine or threonine. Probably acts by adding O-linked sugars to yet unknown proteins (By similarity).</text>
</comment>
<comment type="catalytic activity">
    <reaction evidence="2">
        <text>L-seryl-[protein] + UDP-N-acetyl-alpha-D-glucosamine = 3-O-(N-acetyl-beta-D-glucosaminyl)-L-seryl-[protein] + UDP + H(+)</text>
        <dbReference type="Rhea" id="RHEA:48904"/>
        <dbReference type="Rhea" id="RHEA-COMP:9863"/>
        <dbReference type="Rhea" id="RHEA-COMP:12251"/>
        <dbReference type="ChEBI" id="CHEBI:15378"/>
        <dbReference type="ChEBI" id="CHEBI:29999"/>
        <dbReference type="ChEBI" id="CHEBI:57705"/>
        <dbReference type="ChEBI" id="CHEBI:58223"/>
        <dbReference type="ChEBI" id="CHEBI:90838"/>
        <dbReference type="EC" id="2.4.1.255"/>
    </reaction>
</comment>
<comment type="catalytic activity">
    <reaction evidence="2">
        <text>L-threonyl-[protein] + UDP-N-acetyl-alpha-D-glucosamine = 3-O-(N-acetyl-beta-D-glucosaminyl)-L-threonyl-[protein] + UDP + H(+)</text>
        <dbReference type="Rhea" id="RHEA:48908"/>
        <dbReference type="Rhea" id="RHEA-COMP:11060"/>
        <dbReference type="Rhea" id="RHEA-COMP:12252"/>
        <dbReference type="ChEBI" id="CHEBI:15378"/>
        <dbReference type="ChEBI" id="CHEBI:30013"/>
        <dbReference type="ChEBI" id="CHEBI:57705"/>
        <dbReference type="ChEBI" id="CHEBI:58223"/>
        <dbReference type="ChEBI" id="CHEBI:90840"/>
        <dbReference type="EC" id="2.4.1.255"/>
    </reaction>
</comment>
<comment type="pathway">
    <text>Protein modification; protein glycosylation.</text>
</comment>
<comment type="subcellular location">
    <subcellularLocation>
        <location evidence="1">Nucleus</location>
    </subcellularLocation>
</comment>
<comment type="miscellaneous">
    <text>Does not correspond to the procera gene.</text>
</comment>
<comment type="similarity">
    <text evidence="4">Belongs to the glycosyltransferase 41 family. O-GlcNAc transferase subfamily.</text>
</comment>
<name>SPY_SOLLC</name>
<gene>
    <name type="primary">SPY</name>
</gene>
<dbReference type="EC" id="2.4.1.255" evidence="2"/>
<dbReference type="EMBL" id="AJ312093">
    <property type="protein sequence ID" value="CAC85168.1"/>
    <property type="molecule type" value="Genomic_DNA"/>
</dbReference>
<dbReference type="EMBL" id="AJ312094">
    <property type="protein sequence ID" value="CAC85169.1"/>
    <property type="molecule type" value="mRNA"/>
</dbReference>
<dbReference type="RefSeq" id="NP_001233937.1">
    <property type="nucleotide sequence ID" value="NM_001247008.2"/>
</dbReference>
<dbReference type="RefSeq" id="XP_010325708.1">
    <property type="nucleotide sequence ID" value="XM_010327406.4"/>
</dbReference>
<dbReference type="SMR" id="Q8RVB2"/>
<dbReference type="FunCoup" id="Q8RVB2">
    <property type="interactions" value="2494"/>
</dbReference>
<dbReference type="STRING" id="4081.Q8RVB2"/>
<dbReference type="CAZy" id="GT41">
    <property type="family name" value="Glycosyltransferase Family 41"/>
</dbReference>
<dbReference type="PaxDb" id="4081-Solyc09g010180.2.1"/>
<dbReference type="EnsemblPlants" id="Solyc09g010180.3.1">
    <property type="protein sequence ID" value="Solyc09g010180.3.1"/>
    <property type="gene ID" value="Solyc09g010180.3"/>
</dbReference>
<dbReference type="GeneID" id="543775"/>
<dbReference type="Gramene" id="Solyc09g010180.3.1">
    <property type="protein sequence ID" value="Solyc09g010180.3.1"/>
    <property type="gene ID" value="Solyc09g010180.3"/>
</dbReference>
<dbReference type="KEGG" id="sly:543775"/>
<dbReference type="eggNOG" id="KOG4626">
    <property type="taxonomic scope" value="Eukaryota"/>
</dbReference>
<dbReference type="HOGENOM" id="CLU_001721_4_0_1"/>
<dbReference type="InParanoid" id="Q8RVB2"/>
<dbReference type="OMA" id="CALTYCG"/>
<dbReference type="OrthoDB" id="9991317at2759"/>
<dbReference type="PhylomeDB" id="Q8RVB2"/>
<dbReference type="UniPathway" id="UPA00378"/>
<dbReference type="Proteomes" id="UP000004994">
    <property type="component" value="Chromosome 9"/>
</dbReference>
<dbReference type="GO" id="GO:0005737">
    <property type="term" value="C:cytoplasm"/>
    <property type="evidence" value="ECO:0007669"/>
    <property type="project" value="EnsemblPlants"/>
</dbReference>
<dbReference type="GO" id="GO:0005634">
    <property type="term" value="C:nucleus"/>
    <property type="evidence" value="ECO:0007669"/>
    <property type="project" value="UniProtKB-SubCell"/>
</dbReference>
<dbReference type="GO" id="GO:0046922">
    <property type="term" value="F:peptide-O-fucosyltransferase activity"/>
    <property type="evidence" value="ECO:0007669"/>
    <property type="project" value="EnsemblPlants"/>
</dbReference>
<dbReference type="GO" id="GO:0097363">
    <property type="term" value="F:protein O-acetylglucosaminyltransferase activity"/>
    <property type="evidence" value="ECO:0007669"/>
    <property type="project" value="UniProtKB-EC"/>
</dbReference>
<dbReference type="GO" id="GO:0009736">
    <property type="term" value="P:cytokinin-activated signaling pathway"/>
    <property type="evidence" value="ECO:0007669"/>
    <property type="project" value="EnsemblPlants"/>
</dbReference>
<dbReference type="GO" id="GO:0009740">
    <property type="term" value="P:gibberellic acid mediated signaling pathway"/>
    <property type="evidence" value="ECO:0007669"/>
    <property type="project" value="UniProtKB-KW"/>
</dbReference>
<dbReference type="GO" id="GO:0009938">
    <property type="term" value="P:negative regulation of gibberellic acid mediated signaling pathway"/>
    <property type="evidence" value="ECO:0007669"/>
    <property type="project" value="EnsemblPlants"/>
</dbReference>
<dbReference type="GO" id="GO:2000377">
    <property type="term" value="P:regulation of reactive oxygen species metabolic process"/>
    <property type="evidence" value="ECO:0007669"/>
    <property type="project" value="EnsemblPlants"/>
</dbReference>
<dbReference type="FunFam" id="1.25.40.10:FF:001620">
    <property type="entry name" value="probable UDP-N-acetylglucosamine--peptide N-acetylglucosaminyltransferase SPINDLY"/>
    <property type="match status" value="1"/>
</dbReference>
<dbReference type="Gene3D" id="3.40.50.11380">
    <property type="match status" value="1"/>
</dbReference>
<dbReference type="Gene3D" id="3.40.50.2000">
    <property type="entry name" value="Glycogen Phosphorylase B"/>
    <property type="match status" value="1"/>
</dbReference>
<dbReference type="Gene3D" id="1.25.40.10">
    <property type="entry name" value="Tetratricopeptide repeat domain"/>
    <property type="match status" value="3"/>
</dbReference>
<dbReference type="InterPro" id="IPR051939">
    <property type="entry name" value="Glycosyltr_41/O-GlcNAc_trsf"/>
</dbReference>
<dbReference type="InterPro" id="IPR029489">
    <property type="entry name" value="OGT/SEC/SPY_C"/>
</dbReference>
<dbReference type="InterPro" id="IPR006597">
    <property type="entry name" value="Sel1-like"/>
</dbReference>
<dbReference type="InterPro" id="IPR011990">
    <property type="entry name" value="TPR-like_helical_dom_sf"/>
</dbReference>
<dbReference type="InterPro" id="IPR019734">
    <property type="entry name" value="TPR_rpt"/>
</dbReference>
<dbReference type="PANTHER" id="PTHR44835:SF1">
    <property type="entry name" value="PROTEIN O-GLCNAC TRANSFERASE"/>
    <property type="match status" value="1"/>
</dbReference>
<dbReference type="PANTHER" id="PTHR44835">
    <property type="entry name" value="UDP-N-ACETYLGLUCOSAMINE--PEPTIDE N-ACETYLGLUCOSAMINYLTRANSFERASE SPINDLY-RELATED"/>
    <property type="match status" value="1"/>
</dbReference>
<dbReference type="Pfam" id="PF13844">
    <property type="entry name" value="Glyco_transf_41"/>
    <property type="match status" value="2"/>
</dbReference>
<dbReference type="Pfam" id="PF00515">
    <property type="entry name" value="TPR_1"/>
    <property type="match status" value="4"/>
</dbReference>
<dbReference type="Pfam" id="PF13432">
    <property type="entry name" value="TPR_16"/>
    <property type="match status" value="1"/>
</dbReference>
<dbReference type="Pfam" id="PF13181">
    <property type="entry name" value="TPR_8"/>
    <property type="match status" value="1"/>
</dbReference>
<dbReference type="SMART" id="SM00671">
    <property type="entry name" value="SEL1"/>
    <property type="match status" value="4"/>
</dbReference>
<dbReference type="SMART" id="SM00028">
    <property type="entry name" value="TPR"/>
    <property type="match status" value="11"/>
</dbReference>
<dbReference type="SUPFAM" id="SSF48452">
    <property type="entry name" value="TPR-like"/>
    <property type="match status" value="3"/>
</dbReference>
<dbReference type="PROSITE" id="PS50005">
    <property type="entry name" value="TPR"/>
    <property type="match status" value="10"/>
</dbReference>
<dbReference type="PROSITE" id="PS50293">
    <property type="entry name" value="TPR_REGION"/>
    <property type="match status" value="1"/>
</dbReference>
<reference key="1">
    <citation type="journal article" date="2002" name="J. Exp. Bot.">
        <title>Isolation and characterization of the Spindly homologue from tomato.</title>
        <authorList>
            <person name="Greb T."/>
            <person name="Schmitz G."/>
            <person name="Theres K."/>
        </authorList>
    </citation>
    <scope>NUCLEOTIDE SEQUENCE [GENOMIC DNA / MRNA]</scope>
    <source>
        <tissue>Shoot</tissue>
    </source>
</reference>
<evidence type="ECO:0000250" key="1"/>
<evidence type="ECO:0000250" key="2">
    <source>
        <dbReference type="UniProtKB" id="Q96301"/>
    </source>
</evidence>
<evidence type="ECO:0000256" key="3">
    <source>
        <dbReference type="SAM" id="MobiDB-lite"/>
    </source>
</evidence>
<evidence type="ECO:0000305" key="4"/>
<sequence length="931" mass="103492">MAWTEKDVENGKESESLGNNGFLKGGQSSSGSKGSPGRISHVKKIFEDKDAITYANILRSRNKFVDALAIYESVLEKDSKSIESLIGKGICLQMQNTGRLAFESFSEAIKVDPQNACALTHCGILYKDEGRLVEAAESYEKALKADPSYTPAAECLAIVLTDIGTSLKLAGNTQEGIQKYYEAIKIDSHYAPAYYNLGVVYSEMMQYDMALNCYEKAALERPMYAEAYCNMGVIFKNRGDLESAIACYERCLAVSPNFEIAKNNMAIALTDLGTKVKLEGDINQGVAYYKKALCYNWHYADAMYNLGVAYGEMLKFDMAIVFYELAFHFNPHCAEACNNLGVIYKDRDNLDKAVECYQLALSIKPNFSQSLNNLGVVYTVQGKMDAAASMIEKAIIANPTYAEAYNNLGVLYRDAGNISLAIEAYEQCLKIDPDSRNAGQNRLLAMNYINEGTDDKLYEAHRDWGRRFMKLYPQYTSWDNSKVPERPLVIGYVSPDYFTHSVSYFIEAPLAHHDYTNYKVVVYSSVVKADAKTNRFRDKVMKKGGLWRDIYGIDEKKVSSMIREDKVDIMVELTGHTANNKLGTMACRPAPVQVTWIGYPNTTGLPTIDYRITDAMADPPNAKQKHVEELVRLPNSFLCYTPSPEAGPVCPAPALSNGFVTFGSFNNLAKITPKVLKVWARILSAVPHSRLIVKCKPFCCDSVRQRFLSILEQLGLEPQRVDLLPLILLNHDHMQAYSLMDISLDTFPYAGTTTTCESLYMGVPCVTMGGSVHAHNVGVSLLKTVGLENLVARNEDEYVESAIQLASDVTSLSNLRMSLRELMSKSPLCDGAKFTRNIESIYRSMWRRYCDGDVPSLRRMELLQQQQTQTESVVPEESSVNPSERTITSAPTDGSIKENGFTAVPALALKSSTSEENGVQSNHNGNHGNLS</sequence>
<feature type="chain" id="PRO_0000191779" description="Probable UDP-N-acetylglucosamine--peptide N-acetylglucosaminyltransferase SPINDLY">
    <location>
        <begin position="1"/>
        <end position="931"/>
    </location>
</feature>
<feature type="repeat" description="TPR 1">
    <location>
        <begin position="48"/>
        <end position="81"/>
    </location>
</feature>
<feature type="repeat" description="TPR 2">
    <location>
        <begin position="82"/>
        <end position="115"/>
    </location>
</feature>
<feature type="repeat" description="TPR 3">
    <location>
        <begin position="116"/>
        <end position="149"/>
    </location>
</feature>
<feature type="repeat" description="TPR 4">
    <location>
        <begin position="157"/>
        <end position="190"/>
    </location>
</feature>
<feature type="repeat" description="TPR 5">
    <location>
        <begin position="191"/>
        <end position="224"/>
    </location>
</feature>
<feature type="repeat" description="TPR 6">
    <location>
        <begin position="225"/>
        <end position="258"/>
    </location>
</feature>
<feature type="repeat" description="TPR 7">
    <location>
        <begin position="266"/>
        <end position="299"/>
    </location>
</feature>
<feature type="repeat" description="TPR 8">
    <location>
        <begin position="300"/>
        <end position="333"/>
    </location>
</feature>
<feature type="repeat" description="TPR 9">
    <location>
        <begin position="334"/>
        <end position="367"/>
    </location>
</feature>
<feature type="repeat" description="TPR 10">
    <location>
        <begin position="369"/>
        <end position="401"/>
    </location>
</feature>
<feature type="repeat" description="TPR 11">
    <location>
        <begin position="402"/>
        <end position="435"/>
    </location>
</feature>
<feature type="region of interest" description="Disordered" evidence="3">
    <location>
        <begin position="1"/>
        <end position="38"/>
    </location>
</feature>
<feature type="region of interest" description="Catalytic region">
    <location>
        <begin position="436"/>
        <end position="931"/>
    </location>
</feature>
<feature type="region of interest" description="Disordered" evidence="3">
    <location>
        <begin position="864"/>
        <end position="931"/>
    </location>
</feature>
<feature type="compositionally biased region" description="Basic and acidic residues" evidence="3">
    <location>
        <begin position="1"/>
        <end position="15"/>
    </location>
</feature>
<feature type="compositionally biased region" description="Low complexity" evidence="3">
    <location>
        <begin position="25"/>
        <end position="37"/>
    </location>
</feature>
<feature type="compositionally biased region" description="Low complexity" evidence="3">
    <location>
        <begin position="864"/>
        <end position="884"/>
    </location>
</feature>
<feature type="compositionally biased region" description="Polar residues" evidence="3">
    <location>
        <begin position="910"/>
        <end position="931"/>
    </location>
</feature>
<protein>
    <recommendedName>
        <fullName>Probable UDP-N-acetylglucosamine--peptide N-acetylglucosaminyltransferase SPINDLY</fullName>
        <shortName>LeSPY</shortName>
        <ecNumber evidence="2">2.4.1.255</ecNumber>
    </recommendedName>
</protein>
<keyword id="KW-0939">Gibberellin signaling pathway</keyword>
<keyword id="KW-0328">Glycosyltransferase</keyword>
<keyword id="KW-0539">Nucleus</keyword>
<keyword id="KW-1185">Reference proteome</keyword>
<keyword id="KW-0677">Repeat</keyword>
<keyword id="KW-0802">TPR repeat</keyword>
<keyword id="KW-0808">Transferase</keyword>